<organism>
    <name type="scientific">Saccharolobus islandicus (strain Y.G.57.14 / Yellowstone #1)</name>
    <name type="common">Sulfolobus islandicus</name>
    <dbReference type="NCBI Taxonomy" id="439386"/>
    <lineage>
        <taxon>Archaea</taxon>
        <taxon>Thermoproteota</taxon>
        <taxon>Thermoprotei</taxon>
        <taxon>Sulfolobales</taxon>
        <taxon>Sulfolobaceae</taxon>
        <taxon>Saccharolobus</taxon>
    </lineage>
</organism>
<reference key="1">
    <citation type="journal article" date="2009" name="Proc. Natl. Acad. Sci. U.S.A.">
        <title>Biogeography of the Sulfolobus islandicus pan-genome.</title>
        <authorList>
            <person name="Reno M.L."/>
            <person name="Held N.L."/>
            <person name="Fields C.J."/>
            <person name="Burke P.V."/>
            <person name="Whitaker R.J."/>
        </authorList>
    </citation>
    <scope>NUCLEOTIDE SEQUENCE [LARGE SCALE GENOMIC DNA]</scope>
    <source>
        <strain>Y.G.57.14 / Yellowstone #1</strain>
    </source>
</reference>
<proteinExistence type="inferred from homology"/>
<protein>
    <recommendedName>
        <fullName evidence="1">[LysW]-lysine/[LysW]-ornithine hydrolase</fullName>
        <ecNumber evidence="1">3.5.1.130</ecNumber>
        <ecNumber evidence="1">3.5.1.132</ecNumber>
    </recommendedName>
</protein>
<gene>
    <name evidence="1" type="primary">lysK</name>
    <name type="ordered locus">YG5714_2101</name>
</gene>
<feature type="chain" id="PRO_1000213618" description="[LysW]-lysine/[LysW]-ornithine hydrolase">
    <location>
        <begin position="1"/>
        <end position="346"/>
    </location>
</feature>
<feature type="active site" evidence="1">
    <location>
        <position position="70"/>
    </location>
</feature>
<feature type="active site" description="Proton acceptor" evidence="1">
    <location>
        <position position="122"/>
    </location>
</feature>
<feature type="binding site" evidence="1">
    <location>
        <position position="68"/>
    </location>
    <ligand>
        <name>Zn(2+)</name>
        <dbReference type="ChEBI" id="CHEBI:29105"/>
        <label>1</label>
    </ligand>
</feature>
<feature type="binding site" evidence="1">
    <location>
        <position position="92"/>
    </location>
    <ligand>
        <name>Zn(2+)</name>
        <dbReference type="ChEBI" id="CHEBI:29105"/>
        <label>1</label>
    </ligand>
</feature>
<feature type="binding site" evidence="1">
    <location>
        <position position="92"/>
    </location>
    <ligand>
        <name>Zn(2+)</name>
        <dbReference type="ChEBI" id="CHEBI:29105"/>
        <label>2</label>
    </ligand>
</feature>
<feature type="binding site" evidence="1">
    <location>
        <position position="123"/>
    </location>
    <ligand>
        <name>Zn(2+)</name>
        <dbReference type="ChEBI" id="CHEBI:29105"/>
        <label>2</label>
    </ligand>
</feature>
<feature type="binding site" evidence="1">
    <location>
        <position position="146"/>
    </location>
    <ligand>
        <name>Zn(2+)</name>
        <dbReference type="ChEBI" id="CHEBI:29105"/>
        <label>1</label>
    </ligand>
</feature>
<feature type="binding site" evidence="1">
    <location>
        <position position="317"/>
    </location>
    <ligand>
        <name>Zn(2+)</name>
        <dbReference type="ChEBI" id="CHEBI:29105"/>
        <label>2</label>
    </ligand>
</feature>
<dbReference type="EC" id="3.5.1.130" evidence="1"/>
<dbReference type="EC" id="3.5.1.132" evidence="1"/>
<dbReference type="EMBL" id="CP001403">
    <property type="protein sequence ID" value="ACP46353.1"/>
    <property type="molecule type" value="Genomic_DNA"/>
</dbReference>
<dbReference type="RefSeq" id="WP_012711946.1">
    <property type="nucleotide sequence ID" value="NC_012622.1"/>
</dbReference>
<dbReference type="SMR" id="C3N866"/>
<dbReference type="GeneID" id="7807920"/>
<dbReference type="KEGG" id="siy:YG5714_2101"/>
<dbReference type="HOGENOM" id="CLU_021802_2_0_2"/>
<dbReference type="UniPathway" id="UPA00033">
    <property type="reaction ID" value="UER00039"/>
</dbReference>
<dbReference type="UniPathway" id="UPA00068"/>
<dbReference type="Proteomes" id="UP000002308">
    <property type="component" value="Chromosome"/>
</dbReference>
<dbReference type="GO" id="GO:0005737">
    <property type="term" value="C:cytoplasm"/>
    <property type="evidence" value="ECO:0007669"/>
    <property type="project" value="UniProtKB-SubCell"/>
</dbReference>
<dbReference type="GO" id="GO:0050897">
    <property type="term" value="F:cobalt ion binding"/>
    <property type="evidence" value="ECO:0007669"/>
    <property type="project" value="UniProtKB-UniRule"/>
</dbReference>
<dbReference type="GO" id="GO:0016811">
    <property type="term" value="F:hydrolase activity, acting on carbon-nitrogen (but not peptide) bonds, in linear amides"/>
    <property type="evidence" value="ECO:0007669"/>
    <property type="project" value="UniProtKB-UniRule"/>
</dbReference>
<dbReference type="GO" id="GO:0008270">
    <property type="term" value="F:zinc ion binding"/>
    <property type="evidence" value="ECO:0007669"/>
    <property type="project" value="UniProtKB-UniRule"/>
</dbReference>
<dbReference type="GO" id="GO:0042450">
    <property type="term" value="P:arginine biosynthetic process via ornithine"/>
    <property type="evidence" value="ECO:0007669"/>
    <property type="project" value="UniProtKB-UniRule"/>
</dbReference>
<dbReference type="GO" id="GO:0006526">
    <property type="term" value="P:L-arginine biosynthetic process"/>
    <property type="evidence" value="ECO:0007669"/>
    <property type="project" value="UniProtKB-UniPathway"/>
</dbReference>
<dbReference type="GO" id="GO:0019878">
    <property type="term" value="P:lysine biosynthetic process via aminoadipic acid"/>
    <property type="evidence" value="ECO:0007669"/>
    <property type="project" value="UniProtKB-UniRule"/>
</dbReference>
<dbReference type="CDD" id="cd05653">
    <property type="entry name" value="M20_ArgE_LysK"/>
    <property type="match status" value="1"/>
</dbReference>
<dbReference type="Gene3D" id="3.30.70.360">
    <property type="match status" value="1"/>
</dbReference>
<dbReference type="Gene3D" id="3.40.630.10">
    <property type="entry name" value="Zn peptidases"/>
    <property type="match status" value="1"/>
</dbReference>
<dbReference type="HAMAP" id="MF_01120">
    <property type="entry name" value="LysK"/>
    <property type="match status" value="1"/>
</dbReference>
<dbReference type="InterPro" id="IPR001261">
    <property type="entry name" value="ArgE/DapE_CS"/>
</dbReference>
<dbReference type="InterPro" id="IPR036264">
    <property type="entry name" value="Bact_exopeptidase_dim_dom"/>
</dbReference>
<dbReference type="InterPro" id="IPR010175">
    <property type="entry name" value="LysK"/>
</dbReference>
<dbReference type="InterPro" id="IPR002933">
    <property type="entry name" value="Peptidase_M20"/>
</dbReference>
<dbReference type="InterPro" id="IPR011650">
    <property type="entry name" value="Peptidase_M20_dimer"/>
</dbReference>
<dbReference type="InterPro" id="IPR050072">
    <property type="entry name" value="Peptidase_M20A"/>
</dbReference>
<dbReference type="NCBIfam" id="TIGR01902">
    <property type="entry name" value="dapE-lys-deAc"/>
    <property type="match status" value="1"/>
</dbReference>
<dbReference type="NCBIfam" id="NF001747">
    <property type="entry name" value="PRK00466.1"/>
    <property type="match status" value="1"/>
</dbReference>
<dbReference type="PANTHER" id="PTHR43808:SF28">
    <property type="entry name" value="[LYSW]-LYSINE_[LYSW]-ORNITHINE HYDROLASE"/>
    <property type="match status" value="1"/>
</dbReference>
<dbReference type="PANTHER" id="PTHR43808">
    <property type="entry name" value="ACETYLORNITHINE DEACETYLASE"/>
    <property type="match status" value="1"/>
</dbReference>
<dbReference type="Pfam" id="PF07687">
    <property type="entry name" value="M20_dimer"/>
    <property type="match status" value="1"/>
</dbReference>
<dbReference type="Pfam" id="PF01546">
    <property type="entry name" value="Peptidase_M20"/>
    <property type="match status" value="1"/>
</dbReference>
<dbReference type="SUPFAM" id="SSF55031">
    <property type="entry name" value="Bacterial exopeptidase dimerisation domain"/>
    <property type="match status" value="1"/>
</dbReference>
<dbReference type="SUPFAM" id="SSF53187">
    <property type="entry name" value="Zn-dependent exopeptidases"/>
    <property type="match status" value="1"/>
</dbReference>
<dbReference type="PROSITE" id="PS00758">
    <property type="entry name" value="ARGE_DAPE_CPG2_1"/>
    <property type="match status" value="1"/>
</dbReference>
<sequence length="346" mass="38769">MQQEKELVKQKAKELLLDLLSIYTPSKNETNATKFFEKISNEFNLKLEILPDSNSFILGEGEILLASHVDTVPGYIEPKIENEVIYGRGAVDAKGPLISMIIAAWLLNEKGIKVMVSGLADEESTSIGAKELTLKNFNFKHIIVGEPSNGTDIVVEYRGSIQLDIMCESTPEHSSSAKSNLIVDISKKIIEVYKQPENYDKPSIVPTIIRAGESYNVTPAKLYLHFDVRYAINNKRDDLINEIKDKFQECGLKIVDETPPVKVSINNPVVKSLTRALLKQNIKPRLVRKAGTSDMNILQKITTSIATYGPGNSMLEHTNQEKITLDEIYIGVKTYMLAIEELWQKS</sequence>
<comment type="function">
    <text evidence="1">Catalyzes the release of L-lysine from [LysW]-gamma-L-lysine and the release of L-ornithine from [LysW]-L-ornithine.</text>
</comment>
<comment type="catalytic activity">
    <reaction evidence="1">
        <text>[amino-group carrier protein]-C-terminal-gamma-(L-lysyl)-L-glutamate + H2O = [amino-group carrier protein]-C-terminal-L-glutamate + L-lysine</text>
        <dbReference type="Rhea" id="RHEA:48684"/>
        <dbReference type="Rhea" id="RHEA-COMP:9693"/>
        <dbReference type="Rhea" id="RHEA-COMP:9715"/>
        <dbReference type="ChEBI" id="CHEBI:15377"/>
        <dbReference type="ChEBI" id="CHEBI:32551"/>
        <dbReference type="ChEBI" id="CHEBI:78525"/>
        <dbReference type="ChEBI" id="CHEBI:78526"/>
        <dbReference type="EC" id="3.5.1.130"/>
    </reaction>
</comment>
<comment type="catalytic activity">
    <reaction evidence="1">
        <text>[amino-group carrier protein]-C-terminal-gamma-(L-ornithyl)-L-glutamate + H2O = [amino-group carrier protein]-C-terminal-L-glutamate + L-ornithine</text>
        <dbReference type="Rhea" id="RHEA:52676"/>
        <dbReference type="Rhea" id="RHEA-COMP:9693"/>
        <dbReference type="Rhea" id="RHEA-COMP:13328"/>
        <dbReference type="ChEBI" id="CHEBI:15377"/>
        <dbReference type="ChEBI" id="CHEBI:46911"/>
        <dbReference type="ChEBI" id="CHEBI:78525"/>
        <dbReference type="ChEBI" id="CHEBI:136763"/>
        <dbReference type="EC" id="3.5.1.132"/>
    </reaction>
</comment>
<comment type="cofactor">
    <cofactor evidence="1">
        <name>Zn(2+)</name>
        <dbReference type="ChEBI" id="CHEBI:29105"/>
    </cofactor>
    <cofactor evidence="1">
        <name>Co(2+)</name>
        <dbReference type="ChEBI" id="CHEBI:48828"/>
    </cofactor>
    <text evidence="1">Binds 2 Zn(2+) or Co(2+) ions per subunit.</text>
</comment>
<comment type="pathway">
    <text evidence="1">Amino-acid biosynthesis; L-lysine biosynthesis via AAA pathway; L-lysine from L-alpha-aminoadipate (Thermus route): step 5/5.</text>
</comment>
<comment type="pathway">
    <text evidence="1">Amino-acid biosynthesis; L-arginine biosynthesis.</text>
</comment>
<comment type="subcellular location">
    <subcellularLocation>
        <location evidence="1">Cytoplasm</location>
    </subcellularLocation>
</comment>
<comment type="similarity">
    <text evidence="1">Belongs to the peptidase M20A family. LysK subfamily.</text>
</comment>
<name>LYSK_SACI7</name>
<evidence type="ECO:0000255" key="1">
    <source>
        <dbReference type="HAMAP-Rule" id="MF_01120"/>
    </source>
</evidence>
<accession>C3N866</accession>
<keyword id="KW-0028">Amino-acid biosynthesis</keyword>
<keyword id="KW-0055">Arginine biosynthesis</keyword>
<keyword id="KW-0170">Cobalt</keyword>
<keyword id="KW-0963">Cytoplasm</keyword>
<keyword id="KW-0378">Hydrolase</keyword>
<keyword id="KW-0457">Lysine biosynthesis</keyword>
<keyword id="KW-0479">Metal-binding</keyword>
<keyword id="KW-0862">Zinc</keyword>